<accession>Q8N4K4</accession>
<comment type="subcellular location">
    <subcellularLocation>
        <location evidence="3">Membrane</location>
        <topology evidence="3">Single-pass membrane protein</topology>
    </subcellularLocation>
</comment>
<comment type="similarity">
    <text evidence="3">Belongs to the reprimo family.</text>
</comment>
<organism>
    <name type="scientific">Homo sapiens</name>
    <name type="common">Human</name>
    <dbReference type="NCBI Taxonomy" id="9606"/>
    <lineage>
        <taxon>Eukaryota</taxon>
        <taxon>Metazoa</taxon>
        <taxon>Chordata</taxon>
        <taxon>Craniata</taxon>
        <taxon>Vertebrata</taxon>
        <taxon>Euteleostomi</taxon>
        <taxon>Mammalia</taxon>
        <taxon>Eutheria</taxon>
        <taxon>Euarchontoglires</taxon>
        <taxon>Primates</taxon>
        <taxon>Haplorrhini</taxon>
        <taxon>Catarrhini</taxon>
        <taxon>Hominidae</taxon>
        <taxon>Homo</taxon>
    </lineage>
</organism>
<proteinExistence type="evidence at transcript level"/>
<name>RPRML_HUMAN</name>
<reference key="1">
    <citation type="submission" date="2005-09" db="EMBL/GenBank/DDBJ databases">
        <authorList>
            <person name="Mural R.J."/>
            <person name="Istrail S."/>
            <person name="Sutton G.G."/>
            <person name="Florea L."/>
            <person name="Halpern A.L."/>
            <person name="Mobarry C.M."/>
            <person name="Lippert R."/>
            <person name="Walenz B."/>
            <person name="Shatkay H."/>
            <person name="Dew I."/>
            <person name="Miller J.R."/>
            <person name="Flanigan M.J."/>
            <person name="Edwards N.J."/>
            <person name="Bolanos R."/>
            <person name="Fasulo D."/>
            <person name="Halldorsson B.V."/>
            <person name="Hannenhalli S."/>
            <person name="Turner R."/>
            <person name="Yooseph S."/>
            <person name="Lu F."/>
            <person name="Nusskern D.R."/>
            <person name="Shue B.C."/>
            <person name="Zheng X.H."/>
            <person name="Zhong F."/>
            <person name="Delcher A.L."/>
            <person name="Huson D.H."/>
            <person name="Kravitz S.A."/>
            <person name="Mouchard L."/>
            <person name="Reinert K."/>
            <person name="Remington K.A."/>
            <person name="Clark A.G."/>
            <person name="Waterman M.S."/>
            <person name="Eichler E.E."/>
            <person name="Adams M.D."/>
            <person name="Hunkapiller M.W."/>
            <person name="Myers E.W."/>
            <person name="Venter J.C."/>
        </authorList>
    </citation>
    <scope>NUCLEOTIDE SEQUENCE [LARGE SCALE GENOMIC DNA]</scope>
</reference>
<reference key="2">
    <citation type="journal article" date="2004" name="Genome Res.">
        <title>The status, quality, and expansion of the NIH full-length cDNA project: the Mammalian Gene Collection (MGC).</title>
        <authorList>
            <consortium name="The MGC Project Team"/>
        </authorList>
    </citation>
    <scope>NUCLEOTIDE SEQUENCE [LARGE SCALE MRNA]</scope>
    <source>
        <tissue>Brain</tissue>
        <tissue>Eye</tissue>
    </source>
</reference>
<feature type="chain" id="PRO_0000312756" description="Reprimo-like protein">
    <location>
        <begin position="1"/>
        <end position="120"/>
    </location>
</feature>
<feature type="transmembrane region" description="Helical" evidence="2">
    <location>
        <begin position="67"/>
        <end position="87"/>
    </location>
</feature>
<feature type="modified residue" description="Phosphoserine" evidence="1">
    <location>
        <position position="109"/>
    </location>
</feature>
<evidence type="ECO:0000250" key="1">
    <source>
        <dbReference type="UniProtKB" id="Q3URD2"/>
    </source>
</evidence>
<evidence type="ECO:0000255" key="2"/>
<evidence type="ECO:0000305" key="3"/>
<protein>
    <recommendedName>
        <fullName>Reprimo-like protein</fullName>
    </recommendedName>
</protein>
<dbReference type="EMBL" id="CH471231">
    <property type="protein sequence ID" value="EAW57693.1"/>
    <property type="molecule type" value="Genomic_DNA"/>
</dbReference>
<dbReference type="EMBL" id="BC033942">
    <property type="protein sequence ID" value="AAH33942.2"/>
    <property type="molecule type" value="mRNA"/>
</dbReference>
<dbReference type="EMBL" id="BC108690">
    <property type="protein sequence ID" value="AAI08691.1"/>
    <property type="molecule type" value="mRNA"/>
</dbReference>
<dbReference type="CCDS" id="CCDS11508.1"/>
<dbReference type="RefSeq" id="NP_981945.1">
    <property type="nucleotide sequence ID" value="NM_203400.5"/>
</dbReference>
<dbReference type="SMR" id="Q8N4K4"/>
<dbReference type="BioGRID" id="132672">
    <property type="interactions" value="1"/>
</dbReference>
<dbReference type="FunCoup" id="Q8N4K4">
    <property type="interactions" value="1"/>
</dbReference>
<dbReference type="IntAct" id="Q8N4K4">
    <property type="interactions" value="1"/>
</dbReference>
<dbReference type="STRING" id="9606.ENSP00000318032"/>
<dbReference type="PhosphoSitePlus" id="Q8N4K4"/>
<dbReference type="BioMuta" id="RPRML"/>
<dbReference type="DMDM" id="74728863"/>
<dbReference type="PaxDb" id="9606-ENSP00000318032"/>
<dbReference type="PeptideAtlas" id="Q8N4K4"/>
<dbReference type="Antibodypedia" id="64103">
    <property type="antibodies" value="17 antibodies from 8 providers"/>
</dbReference>
<dbReference type="DNASU" id="388394"/>
<dbReference type="Ensembl" id="ENST00000322329.5">
    <property type="protein sequence ID" value="ENSP00000318032.3"/>
    <property type="gene ID" value="ENSG00000179673.5"/>
</dbReference>
<dbReference type="GeneID" id="388394"/>
<dbReference type="KEGG" id="hsa:388394"/>
<dbReference type="MANE-Select" id="ENST00000322329.5">
    <property type="protein sequence ID" value="ENSP00000318032.3"/>
    <property type="RefSeq nucleotide sequence ID" value="NM_203400.5"/>
    <property type="RefSeq protein sequence ID" value="NP_981945.1"/>
</dbReference>
<dbReference type="UCSC" id="uc002ilb.3">
    <property type="organism name" value="human"/>
</dbReference>
<dbReference type="AGR" id="HGNC:32422"/>
<dbReference type="CTD" id="388394"/>
<dbReference type="DisGeNET" id="388394"/>
<dbReference type="GeneCards" id="RPRML"/>
<dbReference type="HGNC" id="HGNC:32422">
    <property type="gene designation" value="RPRML"/>
</dbReference>
<dbReference type="HPA" id="ENSG00000179673">
    <property type="expression patterns" value="Tissue enriched (brain)"/>
</dbReference>
<dbReference type="neXtProt" id="NX_Q8N4K4"/>
<dbReference type="OpenTargets" id="ENSG00000179673"/>
<dbReference type="PharmGKB" id="PA142670990"/>
<dbReference type="VEuPathDB" id="HostDB:ENSG00000179673"/>
<dbReference type="eggNOG" id="ENOG502S6BR">
    <property type="taxonomic scope" value="Eukaryota"/>
</dbReference>
<dbReference type="GeneTree" id="ENSGT00390000010523"/>
<dbReference type="HOGENOM" id="CLU_170456_0_0_1"/>
<dbReference type="InParanoid" id="Q8N4K4"/>
<dbReference type="OMA" id="STLIGCC"/>
<dbReference type="OrthoDB" id="9828700at2759"/>
<dbReference type="PAN-GO" id="Q8N4K4">
    <property type="GO annotations" value="0 GO annotations based on evolutionary models"/>
</dbReference>
<dbReference type="PhylomeDB" id="Q8N4K4"/>
<dbReference type="TreeFam" id="TF332720"/>
<dbReference type="PathwayCommons" id="Q8N4K4"/>
<dbReference type="SignaLink" id="Q8N4K4"/>
<dbReference type="BioGRID-ORCS" id="388394">
    <property type="hits" value="13 hits in 1123 CRISPR screens"/>
</dbReference>
<dbReference type="GenomeRNAi" id="388394"/>
<dbReference type="Pharos" id="Q8N4K4">
    <property type="development level" value="Tdark"/>
</dbReference>
<dbReference type="PRO" id="PR:Q8N4K4"/>
<dbReference type="Proteomes" id="UP000005640">
    <property type="component" value="Chromosome 17"/>
</dbReference>
<dbReference type="RNAct" id="Q8N4K4">
    <property type="molecule type" value="protein"/>
</dbReference>
<dbReference type="Bgee" id="ENSG00000179673">
    <property type="expression patterns" value="Expressed in nucleus accumbens and 84 other cell types or tissues"/>
</dbReference>
<dbReference type="GO" id="GO:0016020">
    <property type="term" value="C:membrane"/>
    <property type="evidence" value="ECO:0007669"/>
    <property type="project" value="UniProtKB-SubCell"/>
</dbReference>
<dbReference type="InterPro" id="IPR043383">
    <property type="entry name" value="Reprimo_fam"/>
</dbReference>
<dbReference type="PANTHER" id="PTHR28649">
    <property type="entry name" value="PROTEIN REPRIMO-RELATED"/>
    <property type="match status" value="1"/>
</dbReference>
<dbReference type="PANTHER" id="PTHR28649:SF3">
    <property type="entry name" value="REPRIMO-LIKE PROTEIN"/>
    <property type="match status" value="1"/>
</dbReference>
<gene>
    <name type="primary">RPRML</name>
</gene>
<keyword id="KW-0472">Membrane</keyword>
<keyword id="KW-0597">Phosphoprotein</keyword>
<keyword id="KW-1185">Reference proteome</keyword>
<keyword id="KW-0812">Transmembrane</keyword>
<keyword id="KW-1133">Transmembrane helix</keyword>
<sequence>MNATFLNHSGLEEVDGVGGGAGAALGNRTHGLGTWLGCCPGGAPLAASDGVPAGLAPDERSLWVSRVAQIAVLCVLSLTVVFGVFFLGCNLLIKSESMINFLVQERRPSKDVGAAILGLY</sequence>